<dbReference type="EC" id="2.2.1.9" evidence="1"/>
<dbReference type="EMBL" id="CP000551">
    <property type="protein sequence ID" value="ABM69949.1"/>
    <property type="molecule type" value="Genomic_DNA"/>
</dbReference>
<dbReference type="RefSeq" id="WP_011818111.1">
    <property type="nucleotide sequence ID" value="NC_008816.1"/>
</dbReference>
<dbReference type="SMR" id="A2BQ88"/>
<dbReference type="STRING" id="146891.A9601_06631"/>
<dbReference type="KEGG" id="pmb:A9601_06631"/>
<dbReference type="eggNOG" id="COG1165">
    <property type="taxonomic scope" value="Bacteria"/>
</dbReference>
<dbReference type="HOGENOM" id="CLU_006051_3_0_3"/>
<dbReference type="OrthoDB" id="9791859at2"/>
<dbReference type="UniPathway" id="UPA00995"/>
<dbReference type="UniPathway" id="UPA01057">
    <property type="reaction ID" value="UER00164"/>
</dbReference>
<dbReference type="Proteomes" id="UP000002590">
    <property type="component" value="Chromosome"/>
</dbReference>
<dbReference type="GO" id="GO:0070204">
    <property type="term" value="F:2-succinyl-5-enolpyruvyl-6-hydroxy-3-cyclohexene-1-carboxylic-acid synthase activity"/>
    <property type="evidence" value="ECO:0007669"/>
    <property type="project" value="UniProtKB-UniRule"/>
</dbReference>
<dbReference type="GO" id="GO:0000287">
    <property type="term" value="F:magnesium ion binding"/>
    <property type="evidence" value="ECO:0007669"/>
    <property type="project" value="UniProtKB-UniRule"/>
</dbReference>
<dbReference type="GO" id="GO:0030145">
    <property type="term" value="F:manganese ion binding"/>
    <property type="evidence" value="ECO:0007669"/>
    <property type="project" value="UniProtKB-UniRule"/>
</dbReference>
<dbReference type="GO" id="GO:0030976">
    <property type="term" value="F:thiamine pyrophosphate binding"/>
    <property type="evidence" value="ECO:0007669"/>
    <property type="project" value="UniProtKB-UniRule"/>
</dbReference>
<dbReference type="GO" id="GO:0009234">
    <property type="term" value="P:menaquinone biosynthetic process"/>
    <property type="evidence" value="ECO:0007669"/>
    <property type="project" value="InterPro"/>
</dbReference>
<dbReference type="GO" id="GO:0042372">
    <property type="term" value="P:phylloquinone biosynthetic process"/>
    <property type="evidence" value="ECO:0007669"/>
    <property type="project" value="UniProtKB-UniRule"/>
</dbReference>
<dbReference type="CDD" id="cd07037">
    <property type="entry name" value="TPP_PYR_MenD"/>
    <property type="match status" value="1"/>
</dbReference>
<dbReference type="CDD" id="cd02009">
    <property type="entry name" value="TPP_SHCHC_synthase"/>
    <property type="match status" value="1"/>
</dbReference>
<dbReference type="Gene3D" id="3.40.50.970">
    <property type="match status" value="2"/>
</dbReference>
<dbReference type="Gene3D" id="3.40.50.1220">
    <property type="entry name" value="TPP-binding domain"/>
    <property type="match status" value="1"/>
</dbReference>
<dbReference type="HAMAP" id="MF_01659">
    <property type="entry name" value="MenD"/>
    <property type="match status" value="1"/>
</dbReference>
<dbReference type="InterPro" id="IPR004433">
    <property type="entry name" value="MenaQ_synth_MenD"/>
</dbReference>
<dbReference type="InterPro" id="IPR029061">
    <property type="entry name" value="THDP-binding"/>
</dbReference>
<dbReference type="InterPro" id="IPR012001">
    <property type="entry name" value="Thiamin_PyroP_enz_TPP-bd_dom"/>
</dbReference>
<dbReference type="InterPro" id="IPR011766">
    <property type="entry name" value="TPP_enzyme_TPP-bd"/>
</dbReference>
<dbReference type="NCBIfam" id="TIGR00173">
    <property type="entry name" value="menD"/>
    <property type="match status" value="1"/>
</dbReference>
<dbReference type="PANTHER" id="PTHR42916">
    <property type="entry name" value="2-SUCCINYL-5-ENOLPYRUVYL-6-HYDROXY-3-CYCLOHEXENE-1-CARBOXYLATE SYNTHASE"/>
    <property type="match status" value="1"/>
</dbReference>
<dbReference type="PANTHER" id="PTHR42916:SF1">
    <property type="entry name" value="PROTEIN PHYLLO, CHLOROPLASTIC"/>
    <property type="match status" value="1"/>
</dbReference>
<dbReference type="Pfam" id="PF02775">
    <property type="entry name" value="TPP_enzyme_C"/>
    <property type="match status" value="1"/>
</dbReference>
<dbReference type="Pfam" id="PF02776">
    <property type="entry name" value="TPP_enzyme_N"/>
    <property type="match status" value="1"/>
</dbReference>
<dbReference type="PIRSF" id="PIRSF004983">
    <property type="entry name" value="MenD"/>
    <property type="match status" value="1"/>
</dbReference>
<dbReference type="SUPFAM" id="SSF52518">
    <property type="entry name" value="Thiamin diphosphate-binding fold (THDP-binding)"/>
    <property type="match status" value="2"/>
</dbReference>
<proteinExistence type="inferred from homology"/>
<comment type="function">
    <text evidence="1">Catalyzes the thiamine diphosphate-dependent decarboxylation of 2-oxoglutarate and the subsequent addition of the resulting succinic semialdehyde-thiamine pyrophosphate anion to isochorismate to yield 2-succinyl-5-enolpyruvyl-6-hydroxy-3-cyclohexene-1-carboxylate (SEPHCHC).</text>
</comment>
<comment type="catalytic activity">
    <reaction evidence="1">
        <text>isochorismate + 2-oxoglutarate + H(+) = 5-enolpyruvoyl-6-hydroxy-2-succinyl-cyclohex-3-ene-1-carboxylate + CO2</text>
        <dbReference type="Rhea" id="RHEA:25593"/>
        <dbReference type="ChEBI" id="CHEBI:15378"/>
        <dbReference type="ChEBI" id="CHEBI:16526"/>
        <dbReference type="ChEBI" id="CHEBI:16810"/>
        <dbReference type="ChEBI" id="CHEBI:29780"/>
        <dbReference type="ChEBI" id="CHEBI:58818"/>
        <dbReference type="EC" id="2.2.1.9"/>
    </reaction>
</comment>
<comment type="cofactor">
    <cofactor evidence="1">
        <name>Mg(2+)</name>
        <dbReference type="ChEBI" id="CHEBI:18420"/>
    </cofactor>
    <cofactor evidence="1">
        <name>Mn(2+)</name>
        <dbReference type="ChEBI" id="CHEBI:29035"/>
    </cofactor>
</comment>
<comment type="cofactor">
    <cofactor evidence="1">
        <name>thiamine diphosphate</name>
        <dbReference type="ChEBI" id="CHEBI:58937"/>
    </cofactor>
    <text evidence="1">Binds 1 thiamine pyrophosphate per subunit.</text>
</comment>
<comment type="pathway">
    <text evidence="1">Quinol/quinone metabolism; 1,4-dihydroxy-2-naphthoate biosynthesis; 1,4-dihydroxy-2-naphthoate from chorismate: step 2/7.</text>
</comment>
<comment type="pathway">
    <text evidence="1">Cofactor biosynthesis; phylloquinone biosynthesis.</text>
</comment>
<comment type="subunit">
    <text evidence="1">Homodimer.</text>
</comment>
<comment type="similarity">
    <text evidence="1">Belongs to the TPP enzyme family. MenD subfamily.</text>
</comment>
<keyword id="KW-0460">Magnesium</keyword>
<keyword id="KW-0464">Manganese</keyword>
<keyword id="KW-0479">Metal-binding</keyword>
<keyword id="KW-0786">Thiamine pyrophosphate</keyword>
<keyword id="KW-0808">Transferase</keyword>
<feature type="chain" id="PRO_0000341799" description="2-succinyl-5-enolpyruvyl-6-hydroxy-3-cyclohexene-1-carboxylate synthase">
    <location>
        <begin position="1"/>
        <end position="587"/>
    </location>
</feature>
<accession>A2BQ88</accession>
<organism>
    <name type="scientific">Prochlorococcus marinus (strain AS9601)</name>
    <dbReference type="NCBI Taxonomy" id="146891"/>
    <lineage>
        <taxon>Bacteria</taxon>
        <taxon>Bacillati</taxon>
        <taxon>Cyanobacteriota</taxon>
        <taxon>Cyanophyceae</taxon>
        <taxon>Synechococcales</taxon>
        <taxon>Prochlorococcaceae</taxon>
        <taxon>Prochlorococcus</taxon>
    </lineage>
</organism>
<protein>
    <recommendedName>
        <fullName evidence="1">2-succinyl-5-enolpyruvyl-6-hydroxy-3-cyclohexene-1-carboxylate synthase</fullName>
        <shortName evidence="1">SEPHCHC synthase</shortName>
        <ecNumber evidence="1">2.2.1.9</ecNumber>
    </recommendedName>
</protein>
<name>MEND_PROMS</name>
<gene>
    <name evidence="1" type="primary">menD</name>
    <name type="ordered locus">A9601_06631</name>
</gene>
<evidence type="ECO:0000255" key="1">
    <source>
        <dbReference type="HAMAP-Rule" id="MF_01659"/>
    </source>
</evidence>
<sequence length="587" mass="65872">MTSSIECKNFLRSLQLLNLLIKIGVKNLILCPGSRSAPLAIAAGELNKLGLVNIFNSIDERSAGFHSLGISAASGHLSLVITTSGTAVSNLLPAAVEADRSCKGIIFLTADRPLRLKDCGANQTVNQEDFLSSVCRKVLSTNLNGIHETEENEIFNLVRISEKQMSTFPGPIHLNVPIDKPLDISFLNKKNVLEVFERIYLKKKYVFQEVDIKSDKKKFLEISKNLNLDESGIILVGPYQGSINDLPSFNKSLGQLQEITGWPVFADPVSGVYSDLRGLIVNWELVLRKNKNLINCYQLLRLGPMSSSNDLEKFLINFQGVQILIKEKNHRKLDPIKKSFEYDFGLTNFTSLLKKELSINEKNKKSLTPLALDLLEEGKQVKEILKGNITYENQITEYRLANLVPKLWPAENPIMLSASSPIRDWLTFSENGTLTRNCFSFRGASGIDGTLSLALGISRIKNPLLLVTGDLAFLHDINGWLIENSIDMNLTILLINNNGGNIFNRIYKKNLKEDEFKKLFLMPKEINWPKLAEGYQVNFRSVANFKKLREAFDWSISIEKSAIIKVDIDPQNEICEKNSLLEKIIGS</sequence>
<reference key="1">
    <citation type="journal article" date="2007" name="PLoS Genet.">
        <title>Patterns and implications of gene gain and loss in the evolution of Prochlorococcus.</title>
        <authorList>
            <person name="Kettler G.C."/>
            <person name="Martiny A.C."/>
            <person name="Huang K."/>
            <person name="Zucker J."/>
            <person name="Coleman M.L."/>
            <person name="Rodrigue S."/>
            <person name="Chen F."/>
            <person name="Lapidus A."/>
            <person name="Ferriera S."/>
            <person name="Johnson J."/>
            <person name="Steglich C."/>
            <person name="Church G.M."/>
            <person name="Richardson P."/>
            <person name="Chisholm S.W."/>
        </authorList>
    </citation>
    <scope>NUCLEOTIDE SEQUENCE [LARGE SCALE GENOMIC DNA]</scope>
    <source>
        <strain>AS9601</strain>
    </source>
</reference>